<sequence>MAVKIRLKRMGAKKTPFYRVVVADSRSPRDGRFIEEIGTYNPVAQPAEVKINEEAALKWLGNGAKPSDTVRNLFSNQGIMEKFHLSKQGK</sequence>
<proteinExistence type="inferred from homology"/>
<gene>
    <name evidence="1" type="primary">rpsP</name>
    <name type="ordered locus">BCAH820_3858</name>
</gene>
<keyword id="KW-0687">Ribonucleoprotein</keyword>
<keyword id="KW-0689">Ribosomal protein</keyword>
<comment type="similarity">
    <text evidence="1">Belongs to the bacterial ribosomal protein bS16 family.</text>
</comment>
<accession>B7JJT1</accession>
<feature type="chain" id="PRO_1000196332" description="Small ribosomal subunit protein bS16">
    <location>
        <begin position="1"/>
        <end position="90"/>
    </location>
</feature>
<dbReference type="EMBL" id="CP001283">
    <property type="protein sequence ID" value="ACK90701.1"/>
    <property type="molecule type" value="Genomic_DNA"/>
</dbReference>
<dbReference type="RefSeq" id="WP_000268750.1">
    <property type="nucleotide sequence ID" value="NC_011773.1"/>
</dbReference>
<dbReference type="SMR" id="B7JJT1"/>
<dbReference type="GeneID" id="93007268"/>
<dbReference type="KEGG" id="bcu:BCAH820_3858"/>
<dbReference type="HOGENOM" id="CLU_100590_5_0_9"/>
<dbReference type="Proteomes" id="UP000001363">
    <property type="component" value="Chromosome"/>
</dbReference>
<dbReference type="GO" id="GO:0005737">
    <property type="term" value="C:cytoplasm"/>
    <property type="evidence" value="ECO:0007669"/>
    <property type="project" value="UniProtKB-ARBA"/>
</dbReference>
<dbReference type="GO" id="GO:0015935">
    <property type="term" value="C:small ribosomal subunit"/>
    <property type="evidence" value="ECO:0007669"/>
    <property type="project" value="TreeGrafter"/>
</dbReference>
<dbReference type="GO" id="GO:0003735">
    <property type="term" value="F:structural constituent of ribosome"/>
    <property type="evidence" value="ECO:0007669"/>
    <property type="project" value="InterPro"/>
</dbReference>
<dbReference type="GO" id="GO:0006412">
    <property type="term" value="P:translation"/>
    <property type="evidence" value="ECO:0007669"/>
    <property type="project" value="UniProtKB-UniRule"/>
</dbReference>
<dbReference type="FunFam" id="3.30.1320.10:FF:000002">
    <property type="entry name" value="30S ribosomal protein S16"/>
    <property type="match status" value="1"/>
</dbReference>
<dbReference type="Gene3D" id="3.30.1320.10">
    <property type="match status" value="1"/>
</dbReference>
<dbReference type="HAMAP" id="MF_00385">
    <property type="entry name" value="Ribosomal_bS16"/>
    <property type="match status" value="1"/>
</dbReference>
<dbReference type="InterPro" id="IPR000307">
    <property type="entry name" value="Ribosomal_bS16"/>
</dbReference>
<dbReference type="InterPro" id="IPR020592">
    <property type="entry name" value="Ribosomal_bS16_CS"/>
</dbReference>
<dbReference type="InterPro" id="IPR023803">
    <property type="entry name" value="Ribosomal_bS16_dom_sf"/>
</dbReference>
<dbReference type="NCBIfam" id="TIGR00002">
    <property type="entry name" value="S16"/>
    <property type="match status" value="1"/>
</dbReference>
<dbReference type="PANTHER" id="PTHR12919">
    <property type="entry name" value="30S RIBOSOMAL PROTEIN S16"/>
    <property type="match status" value="1"/>
</dbReference>
<dbReference type="PANTHER" id="PTHR12919:SF20">
    <property type="entry name" value="SMALL RIBOSOMAL SUBUNIT PROTEIN BS16M"/>
    <property type="match status" value="1"/>
</dbReference>
<dbReference type="Pfam" id="PF00886">
    <property type="entry name" value="Ribosomal_S16"/>
    <property type="match status" value="1"/>
</dbReference>
<dbReference type="SUPFAM" id="SSF54565">
    <property type="entry name" value="Ribosomal protein S16"/>
    <property type="match status" value="1"/>
</dbReference>
<dbReference type="PROSITE" id="PS00732">
    <property type="entry name" value="RIBOSOMAL_S16"/>
    <property type="match status" value="1"/>
</dbReference>
<name>RS16_BACC0</name>
<protein>
    <recommendedName>
        <fullName evidence="1">Small ribosomal subunit protein bS16</fullName>
    </recommendedName>
    <alternativeName>
        <fullName evidence="2">30S ribosomal protein S16</fullName>
    </alternativeName>
</protein>
<evidence type="ECO:0000255" key="1">
    <source>
        <dbReference type="HAMAP-Rule" id="MF_00385"/>
    </source>
</evidence>
<evidence type="ECO:0000305" key="2"/>
<reference key="1">
    <citation type="submission" date="2008-10" db="EMBL/GenBank/DDBJ databases">
        <title>Genome sequence of Bacillus cereus AH820.</title>
        <authorList>
            <person name="Dodson R.J."/>
            <person name="Durkin A.S."/>
            <person name="Rosovitz M.J."/>
            <person name="Rasko D.A."/>
            <person name="Hoffmaster A."/>
            <person name="Ravel J."/>
            <person name="Sutton G."/>
        </authorList>
    </citation>
    <scope>NUCLEOTIDE SEQUENCE [LARGE SCALE GENOMIC DNA]</scope>
    <source>
        <strain>AH820</strain>
    </source>
</reference>
<organism>
    <name type="scientific">Bacillus cereus (strain AH820)</name>
    <dbReference type="NCBI Taxonomy" id="405535"/>
    <lineage>
        <taxon>Bacteria</taxon>
        <taxon>Bacillati</taxon>
        <taxon>Bacillota</taxon>
        <taxon>Bacilli</taxon>
        <taxon>Bacillales</taxon>
        <taxon>Bacillaceae</taxon>
        <taxon>Bacillus</taxon>
        <taxon>Bacillus cereus group</taxon>
    </lineage>
</organism>